<organism>
    <name type="scientific">Lacticaseibacillus paracasei (strain ATCC 334 / BCRC 17002 / CCUG 31169 / CIP 107868 / KCTC 3260 / NRRL B-441)</name>
    <name type="common">Lactobacillus paracasei</name>
    <dbReference type="NCBI Taxonomy" id="321967"/>
    <lineage>
        <taxon>Bacteria</taxon>
        <taxon>Bacillati</taxon>
        <taxon>Bacillota</taxon>
        <taxon>Bacilli</taxon>
        <taxon>Lactobacillales</taxon>
        <taxon>Lactobacillaceae</taxon>
        <taxon>Lacticaseibacillus</taxon>
    </lineage>
</organism>
<keyword id="KW-0067">ATP-binding</keyword>
<keyword id="KW-0436">Ligase</keyword>
<keyword id="KW-0547">Nucleotide-binding</keyword>
<keyword id="KW-0648">Protein biosynthesis</keyword>
<keyword id="KW-1185">Reference proteome</keyword>
<dbReference type="EC" id="6.3.5.7" evidence="1"/>
<dbReference type="EMBL" id="CP000423">
    <property type="protein sequence ID" value="ABJ69852.1"/>
    <property type="molecule type" value="Genomic_DNA"/>
</dbReference>
<dbReference type="RefSeq" id="WP_011674372.1">
    <property type="nucleotide sequence ID" value="NC_008526.1"/>
</dbReference>
<dbReference type="RefSeq" id="YP_806294.1">
    <property type="nucleotide sequence ID" value="NC_008526.1"/>
</dbReference>
<dbReference type="SMR" id="Q03AC0"/>
<dbReference type="STRING" id="321967.LSEI_1058"/>
<dbReference type="PaxDb" id="321967-LSEI_1058"/>
<dbReference type="KEGG" id="lca:LSEI_1058"/>
<dbReference type="PATRIC" id="fig|321967.11.peg.1030"/>
<dbReference type="HOGENOM" id="CLU_009600_0_3_9"/>
<dbReference type="Proteomes" id="UP000001651">
    <property type="component" value="Chromosome"/>
</dbReference>
<dbReference type="GO" id="GO:0030956">
    <property type="term" value="C:glutamyl-tRNA(Gln) amidotransferase complex"/>
    <property type="evidence" value="ECO:0007669"/>
    <property type="project" value="InterPro"/>
</dbReference>
<dbReference type="GO" id="GO:0005524">
    <property type="term" value="F:ATP binding"/>
    <property type="evidence" value="ECO:0007669"/>
    <property type="project" value="UniProtKB-KW"/>
</dbReference>
<dbReference type="GO" id="GO:0050567">
    <property type="term" value="F:glutaminyl-tRNA synthase (glutamine-hydrolyzing) activity"/>
    <property type="evidence" value="ECO:0007669"/>
    <property type="project" value="UniProtKB-UniRule"/>
</dbReference>
<dbReference type="GO" id="GO:0006412">
    <property type="term" value="P:translation"/>
    <property type="evidence" value="ECO:0007669"/>
    <property type="project" value="UniProtKB-UniRule"/>
</dbReference>
<dbReference type="Gene3D" id="3.90.1300.10">
    <property type="entry name" value="Amidase signature (AS) domain"/>
    <property type="match status" value="1"/>
</dbReference>
<dbReference type="HAMAP" id="MF_00120">
    <property type="entry name" value="GatA"/>
    <property type="match status" value="1"/>
</dbReference>
<dbReference type="InterPro" id="IPR000120">
    <property type="entry name" value="Amidase"/>
</dbReference>
<dbReference type="InterPro" id="IPR020556">
    <property type="entry name" value="Amidase_CS"/>
</dbReference>
<dbReference type="InterPro" id="IPR023631">
    <property type="entry name" value="Amidase_dom"/>
</dbReference>
<dbReference type="InterPro" id="IPR036928">
    <property type="entry name" value="AS_sf"/>
</dbReference>
<dbReference type="InterPro" id="IPR004412">
    <property type="entry name" value="GatA"/>
</dbReference>
<dbReference type="NCBIfam" id="TIGR00132">
    <property type="entry name" value="gatA"/>
    <property type="match status" value="1"/>
</dbReference>
<dbReference type="PANTHER" id="PTHR11895:SF151">
    <property type="entry name" value="GLUTAMYL-TRNA(GLN) AMIDOTRANSFERASE SUBUNIT A"/>
    <property type="match status" value="1"/>
</dbReference>
<dbReference type="PANTHER" id="PTHR11895">
    <property type="entry name" value="TRANSAMIDASE"/>
    <property type="match status" value="1"/>
</dbReference>
<dbReference type="Pfam" id="PF01425">
    <property type="entry name" value="Amidase"/>
    <property type="match status" value="1"/>
</dbReference>
<dbReference type="SUPFAM" id="SSF75304">
    <property type="entry name" value="Amidase signature (AS) enzymes"/>
    <property type="match status" value="1"/>
</dbReference>
<dbReference type="PROSITE" id="PS00571">
    <property type="entry name" value="AMIDASES"/>
    <property type="match status" value="1"/>
</dbReference>
<feature type="chain" id="PRO_1000015844" description="Glutamyl-tRNA(Gln) amidotransferase subunit A">
    <location>
        <begin position="1"/>
        <end position="484"/>
    </location>
</feature>
<feature type="active site" description="Charge relay system" evidence="1">
    <location>
        <position position="77"/>
    </location>
</feature>
<feature type="active site" description="Charge relay system" evidence="1">
    <location>
        <position position="152"/>
    </location>
</feature>
<feature type="active site" description="Acyl-ester intermediate" evidence="1">
    <location>
        <position position="176"/>
    </location>
</feature>
<comment type="function">
    <text evidence="1">Allows the formation of correctly charged Gln-tRNA(Gln) through the transamidation of misacylated Glu-tRNA(Gln) in organisms which lack glutaminyl-tRNA synthetase. The reaction takes place in the presence of glutamine and ATP through an activated gamma-phospho-Glu-tRNA(Gln).</text>
</comment>
<comment type="catalytic activity">
    <reaction evidence="1">
        <text>L-glutamyl-tRNA(Gln) + L-glutamine + ATP + H2O = L-glutaminyl-tRNA(Gln) + L-glutamate + ADP + phosphate + H(+)</text>
        <dbReference type="Rhea" id="RHEA:17521"/>
        <dbReference type="Rhea" id="RHEA-COMP:9681"/>
        <dbReference type="Rhea" id="RHEA-COMP:9684"/>
        <dbReference type="ChEBI" id="CHEBI:15377"/>
        <dbReference type="ChEBI" id="CHEBI:15378"/>
        <dbReference type="ChEBI" id="CHEBI:29985"/>
        <dbReference type="ChEBI" id="CHEBI:30616"/>
        <dbReference type="ChEBI" id="CHEBI:43474"/>
        <dbReference type="ChEBI" id="CHEBI:58359"/>
        <dbReference type="ChEBI" id="CHEBI:78520"/>
        <dbReference type="ChEBI" id="CHEBI:78521"/>
        <dbReference type="ChEBI" id="CHEBI:456216"/>
        <dbReference type="EC" id="6.3.5.7"/>
    </reaction>
</comment>
<comment type="subunit">
    <text evidence="1">Heterotrimer of A, B and C subunits.</text>
</comment>
<comment type="similarity">
    <text evidence="1">Belongs to the amidase family. GatA subfamily.</text>
</comment>
<name>GATA_LACP3</name>
<reference key="1">
    <citation type="journal article" date="2006" name="Proc. Natl. Acad. Sci. U.S.A.">
        <title>Comparative genomics of the lactic acid bacteria.</title>
        <authorList>
            <person name="Makarova K.S."/>
            <person name="Slesarev A."/>
            <person name="Wolf Y.I."/>
            <person name="Sorokin A."/>
            <person name="Mirkin B."/>
            <person name="Koonin E.V."/>
            <person name="Pavlov A."/>
            <person name="Pavlova N."/>
            <person name="Karamychev V."/>
            <person name="Polouchine N."/>
            <person name="Shakhova V."/>
            <person name="Grigoriev I."/>
            <person name="Lou Y."/>
            <person name="Rohksar D."/>
            <person name="Lucas S."/>
            <person name="Huang K."/>
            <person name="Goodstein D.M."/>
            <person name="Hawkins T."/>
            <person name="Plengvidhya V."/>
            <person name="Welker D."/>
            <person name="Hughes J."/>
            <person name="Goh Y."/>
            <person name="Benson A."/>
            <person name="Baldwin K."/>
            <person name="Lee J.-H."/>
            <person name="Diaz-Muniz I."/>
            <person name="Dosti B."/>
            <person name="Smeianov V."/>
            <person name="Wechter W."/>
            <person name="Barabote R."/>
            <person name="Lorca G."/>
            <person name="Altermann E."/>
            <person name="Barrangou R."/>
            <person name="Ganesan B."/>
            <person name="Xie Y."/>
            <person name="Rawsthorne H."/>
            <person name="Tamir D."/>
            <person name="Parker C."/>
            <person name="Breidt F."/>
            <person name="Broadbent J.R."/>
            <person name="Hutkins R."/>
            <person name="O'Sullivan D."/>
            <person name="Steele J."/>
            <person name="Unlu G."/>
            <person name="Saier M.H. Jr."/>
            <person name="Klaenhammer T."/>
            <person name="Richardson P."/>
            <person name="Kozyavkin S."/>
            <person name="Weimer B.C."/>
            <person name="Mills D.A."/>
        </authorList>
    </citation>
    <scope>NUCLEOTIDE SEQUENCE [LARGE SCALE GENOMIC DNA]</scope>
    <source>
        <strain>ATCC 334 / BCRC 17002 / CCUG 31169 / CIP 107868 / KCTC 3260 / NRRL B-441</strain>
    </source>
</reference>
<gene>
    <name evidence="1" type="primary">gatA</name>
    <name type="ordered locus">LSEI_1058</name>
</gene>
<accession>Q03AC0</accession>
<proteinExistence type="inferred from homology"/>
<protein>
    <recommendedName>
        <fullName evidence="1">Glutamyl-tRNA(Gln) amidotransferase subunit A</fullName>
        <shortName evidence="1">Glu-ADT subunit A</shortName>
        <ecNumber evidence="1">6.3.5.7</ecNumber>
    </recommendedName>
</protein>
<sequence length="484" mass="51333">MDYFKTSIDQLHEQLRSGKVTSSQLVDETLAGINQLDAEVDAFLALNADGAKEKAAAVDAAGIADDQPLAGVPIAIKDNIVTKGVVTTAASKILANFNPIYDATVIQKLDAAGAINVGKTNMDEFAMGSSTENSAFKTTKNAWDHTRVPGGSSGGSAAAVAAGEVIAALGSDTGGSIRQPAAFNGIVGVKPTYGRVSRWGLIAFSSSLDQIGTLTRHVKDAAQLLNVIAGHDERDSTTADTPVPDFTAKIGQDIKGMKIALPKEYLGKGVDPAVADKIKAAAKQFEDMGATVTEVSLPHTQYAVPSYYIIASSEASSNLQRFDGIRYGFRAKDVKNIEDVYVRSRSEGFGPEVKRRIMLGTFSLSAGFYDAYFKKAGQVRTLITRDFEDVFKDYDLIIGPTTPTVAFKIGEKVTDPVTMYMNDILTIPVNLAGLPAASVPAGFVDGMPVGLQLIGKHFDESTIFQVAAAFEAQNDYLAQIPGGK</sequence>
<evidence type="ECO:0000255" key="1">
    <source>
        <dbReference type="HAMAP-Rule" id="MF_00120"/>
    </source>
</evidence>